<evidence type="ECO:0000255" key="1">
    <source>
        <dbReference type="HAMAP-Rule" id="MF_00537"/>
    </source>
</evidence>
<evidence type="ECO:0000305" key="2"/>
<name>RS14_PSYCK</name>
<comment type="function">
    <text evidence="1">Binds 16S rRNA, required for the assembly of 30S particles and may also be responsible for determining the conformation of the 16S rRNA at the A site.</text>
</comment>
<comment type="subunit">
    <text evidence="1">Part of the 30S ribosomal subunit. Contacts proteins S3 and S10.</text>
</comment>
<comment type="similarity">
    <text evidence="1">Belongs to the universal ribosomal protein uS14 family.</text>
</comment>
<gene>
    <name evidence="1" type="primary">rpsN</name>
    <name type="ordered locus">Pcryo_0497</name>
</gene>
<sequence length="101" mass="11754">MAKKSMINRELKREKMVAKYADKRIKLKETISDMTASDETRMEAMLELQALPRNASPVRLRNRCAITGRPHGYFRKFGLSRNMLRERVMQGDVPGVRKASW</sequence>
<organism>
    <name type="scientific">Psychrobacter cryohalolentis (strain ATCC BAA-1226 / DSM 17306 / VKM B-2378 / K5)</name>
    <dbReference type="NCBI Taxonomy" id="335284"/>
    <lineage>
        <taxon>Bacteria</taxon>
        <taxon>Pseudomonadati</taxon>
        <taxon>Pseudomonadota</taxon>
        <taxon>Gammaproteobacteria</taxon>
        <taxon>Moraxellales</taxon>
        <taxon>Moraxellaceae</taxon>
        <taxon>Psychrobacter</taxon>
    </lineage>
</organism>
<feature type="chain" id="PRO_1000128525" description="Small ribosomal subunit protein uS14">
    <location>
        <begin position="1"/>
        <end position="101"/>
    </location>
</feature>
<protein>
    <recommendedName>
        <fullName evidence="1">Small ribosomal subunit protein uS14</fullName>
    </recommendedName>
    <alternativeName>
        <fullName evidence="2">30S ribosomal protein S14</fullName>
    </alternativeName>
</protein>
<dbReference type="EMBL" id="CP000323">
    <property type="protein sequence ID" value="ABE74280.1"/>
    <property type="molecule type" value="Genomic_DNA"/>
</dbReference>
<dbReference type="RefSeq" id="WP_011279798.1">
    <property type="nucleotide sequence ID" value="NC_007969.1"/>
</dbReference>
<dbReference type="SMR" id="Q1QDH3"/>
<dbReference type="STRING" id="335284.Pcryo_0497"/>
<dbReference type="KEGG" id="pcr:Pcryo_0497"/>
<dbReference type="eggNOG" id="COG0199">
    <property type="taxonomic scope" value="Bacteria"/>
</dbReference>
<dbReference type="HOGENOM" id="CLU_139869_0_1_6"/>
<dbReference type="Proteomes" id="UP000002425">
    <property type="component" value="Chromosome"/>
</dbReference>
<dbReference type="GO" id="GO:0005737">
    <property type="term" value="C:cytoplasm"/>
    <property type="evidence" value="ECO:0007669"/>
    <property type="project" value="UniProtKB-ARBA"/>
</dbReference>
<dbReference type="GO" id="GO:0015935">
    <property type="term" value="C:small ribosomal subunit"/>
    <property type="evidence" value="ECO:0007669"/>
    <property type="project" value="TreeGrafter"/>
</dbReference>
<dbReference type="GO" id="GO:0019843">
    <property type="term" value="F:rRNA binding"/>
    <property type="evidence" value="ECO:0007669"/>
    <property type="project" value="UniProtKB-UniRule"/>
</dbReference>
<dbReference type="GO" id="GO:0003735">
    <property type="term" value="F:structural constituent of ribosome"/>
    <property type="evidence" value="ECO:0007669"/>
    <property type="project" value="InterPro"/>
</dbReference>
<dbReference type="GO" id="GO:0006412">
    <property type="term" value="P:translation"/>
    <property type="evidence" value="ECO:0007669"/>
    <property type="project" value="UniProtKB-UniRule"/>
</dbReference>
<dbReference type="FunFam" id="1.10.287.1480:FF:000001">
    <property type="entry name" value="30S ribosomal protein S14"/>
    <property type="match status" value="1"/>
</dbReference>
<dbReference type="Gene3D" id="1.10.287.1480">
    <property type="match status" value="1"/>
</dbReference>
<dbReference type="HAMAP" id="MF_00537">
    <property type="entry name" value="Ribosomal_uS14_1"/>
    <property type="match status" value="1"/>
</dbReference>
<dbReference type="InterPro" id="IPR001209">
    <property type="entry name" value="Ribosomal_uS14"/>
</dbReference>
<dbReference type="InterPro" id="IPR023036">
    <property type="entry name" value="Ribosomal_uS14_bac/plastid"/>
</dbReference>
<dbReference type="InterPro" id="IPR018271">
    <property type="entry name" value="Ribosomal_uS14_CS"/>
</dbReference>
<dbReference type="NCBIfam" id="NF006477">
    <property type="entry name" value="PRK08881.1"/>
    <property type="match status" value="1"/>
</dbReference>
<dbReference type="PANTHER" id="PTHR19836">
    <property type="entry name" value="30S RIBOSOMAL PROTEIN S14"/>
    <property type="match status" value="1"/>
</dbReference>
<dbReference type="PANTHER" id="PTHR19836:SF19">
    <property type="entry name" value="SMALL RIBOSOMAL SUBUNIT PROTEIN US14M"/>
    <property type="match status" value="1"/>
</dbReference>
<dbReference type="Pfam" id="PF00253">
    <property type="entry name" value="Ribosomal_S14"/>
    <property type="match status" value="1"/>
</dbReference>
<dbReference type="SUPFAM" id="SSF57716">
    <property type="entry name" value="Glucocorticoid receptor-like (DNA-binding domain)"/>
    <property type="match status" value="1"/>
</dbReference>
<dbReference type="PROSITE" id="PS00527">
    <property type="entry name" value="RIBOSOMAL_S14"/>
    <property type="match status" value="1"/>
</dbReference>
<keyword id="KW-0687">Ribonucleoprotein</keyword>
<keyword id="KW-0689">Ribosomal protein</keyword>
<keyword id="KW-0694">RNA-binding</keyword>
<keyword id="KW-0699">rRNA-binding</keyword>
<accession>Q1QDH3</accession>
<proteinExistence type="inferred from homology"/>
<reference key="1">
    <citation type="submission" date="2006-03" db="EMBL/GenBank/DDBJ databases">
        <title>Complete sequence of chromosome of Psychrobacter cryohalolentis K5.</title>
        <authorList>
            <consortium name="US DOE Joint Genome Institute"/>
            <person name="Copeland A."/>
            <person name="Lucas S."/>
            <person name="Lapidus A."/>
            <person name="Barry K."/>
            <person name="Detter J.C."/>
            <person name="Glavina T."/>
            <person name="Hammon N."/>
            <person name="Israni S."/>
            <person name="Dalin E."/>
            <person name="Tice H."/>
            <person name="Pitluck S."/>
            <person name="Brettin T."/>
            <person name="Bruce D."/>
            <person name="Han C."/>
            <person name="Tapia R."/>
            <person name="Sims D.R."/>
            <person name="Gilna P."/>
            <person name="Schmutz J."/>
            <person name="Larimer F."/>
            <person name="Land M."/>
            <person name="Hauser L."/>
            <person name="Kyrpides N."/>
            <person name="Kim E."/>
            <person name="Richardson P."/>
        </authorList>
    </citation>
    <scope>NUCLEOTIDE SEQUENCE [LARGE SCALE GENOMIC DNA]</scope>
    <source>
        <strain>ATCC BAA-1226 / DSM 17306 / VKM B-2378 / K5</strain>
    </source>
</reference>